<accession>A1RH70</accession>
<name>Y1172_SHESW</name>
<reference key="1">
    <citation type="submission" date="2006-12" db="EMBL/GenBank/DDBJ databases">
        <title>Complete sequence of Shewanella sp. W3-18-1.</title>
        <authorList>
            <consortium name="US DOE Joint Genome Institute"/>
            <person name="Copeland A."/>
            <person name="Lucas S."/>
            <person name="Lapidus A."/>
            <person name="Barry K."/>
            <person name="Detter J.C."/>
            <person name="Glavina del Rio T."/>
            <person name="Hammon N."/>
            <person name="Israni S."/>
            <person name="Dalin E."/>
            <person name="Tice H."/>
            <person name="Pitluck S."/>
            <person name="Chain P."/>
            <person name="Malfatti S."/>
            <person name="Shin M."/>
            <person name="Vergez L."/>
            <person name="Schmutz J."/>
            <person name="Larimer F."/>
            <person name="Land M."/>
            <person name="Hauser L."/>
            <person name="Kyrpides N."/>
            <person name="Lykidis A."/>
            <person name="Tiedje J."/>
            <person name="Richardson P."/>
        </authorList>
    </citation>
    <scope>NUCLEOTIDE SEQUENCE [LARGE SCALE GENOMIC DNA]</scope>
    <source>
        <strain>W3-18-1</strain>
    </source>
</reference>
<protein>
    <recommendedName>
        <fullName evidence="1">UPF0060 membrane protein Sputw3181_1172</fullName>
    </recommendedName>
</protein>
<comment type="subcellular location">
    <subcellularLocation>
        <location evidence="1">Cell inner membrane</location>
        <topology evidence="1">Multi-pass membrane protein</topology>
    </subcellularLocation>
</comment>
<comment type="similarity">
    <text evidence="1">Belongs to the UPF0060 family.</text>
</comment>
<proteinExistence type="inferred from homology"/>
<feature type="chain" id="PRO_0000282264" description="UPF0060 membrane protein Sputw3181_1172">
    <location>
        <begin position="1"/>
        <end position="108"/>
    </location>
</feature>
<feature type="transmembrane region" description="Helical" evidence="1">
    <location>
        <begin position="3"/>
        <end position="23"/>
    </location>
</feature>
<feature type="transmembrane region" description="Helical" evidence="1">
    <location>
        <begin position="31"/>
        <end position="51"/>
    </location>
</feature>
<feature type="transmembrane region" description="Helical" evidence="1">
    <location>
        <begin position="63"/>
        <end position="83"/>
    </location>
</feature>
<feature type="transmembrane region" description="Helical" evidence="1">
    <location>
        <begin position="87"/>
        <end position="107"/>
    </location>
</feature>
<keyword id="KW-0997">Cell inner membrane</keyword>
<keyword id="KW-1003">Cell membrane</keyword>
<keyword id="KW-0472">Membrane</keyword>
<keyword id="KW-0812">Transmembrane</keyword>
<keyword id="KW-1133">Transmembrane helix</keyword>
<evidence type="ECO:0000255" key="1">
    <source>
        <dbReference type="HAMAP-Rule" id="MF_00010"/>
    </source>
</evidence>
<dbReference type="EMBL" id="CP000503">
    <property type="protein sequence ID" value="ABM24015.1"/>
    <property type="molecule type" value="Genomic_DNA"/>
</dbReference>
<dbReference type="RefSeq" id="WP_011788527.1">
    <property type="nucleotide sequence ID" value="NC_008750.1"/>
</dbReference>
<dbReference type="SMR" id="A1RH70"/>
<dbReference type="KEGG" id="shw:Sputw3181_1172"/>
<dbReference type="HOGENOM" id="CLU_117653_2_0_6"/>
<dbReference type="Proteomes" id="UP000002597">
    <property type="component" value="Chromosome"/>
</dbReference>
<dbReference type="GO" id="GO:0005886">
    <property type="term" value="C:plasma membrane"/>
    <property type="evidence" value="ECO:0007669"/>
    <property type="project" value="UniProtKB-SubCell"/>
</dbReference>
<dbReference type="HAMAP" id="MF_00010">
    <property type="entry name" value="UPF0060"/>
    <property type="match status" value="1"/>
</dbReference>
<dbReference type="InterPro" id="IPR003844">
    <property type="entry name" value="UPF0060"/>
</dbReference>
<dbReference type="NCBIfam" id="NF002586">
    <property type="entry name" value="PRK02237.1"/>
    <property type="match status" value="1"/>
</dbReference>
<dbReference type="PANTHER" id="PTHR36116">
    <property type="entry name" value="UPF0060 MEMBRANE PROTEIN YNFA"/>
    <property type="match status" value="1"/>
</dbReference>
<dbReference type="PANTHER" id="PTHR36116:SF1">
    <property type="entry name" value="UPF0060 MEMBRANE PROTEIN YNFA"/>
    <property type="match status" value="1"/>
</dbReference>
<dbReference type="Pfam" id="PF02694">
    <property type="entry name" value="UPF0060"/>
    <property type="match status" value="1"/>
</dbReference>
<dbReference type="SUPFAM" id="SSF103481">
    <property type="entry name" value="Multidrug resistance efflux transporter EmrE"/>
    <property type="match status" value="1"/>
</dbReference>
<organism>
    <name type="scientific">Shewanella sp. (strain W3-18-1)</name>
    <dbReference type="NCBI Taxonomy" id="351745"/>
    <lineage>
        <taxon>Bacteria</taxon>
        <taxon>Pseudomonadati</taxon>
        <taxon>Pseudomonadota</taxon>
        <taxon>Gammaproteobacteria</taxon>
        <taxon>Alteromonadales</taxon>
        <taxon>Shewanellaceae</taxon>
        <taxon>Shewanella</taxon>
    </lineage>
</organism>
<sequence length="108" mass="11686">MTVITTLGLFIITAIAEIVGCYLPYLWLKKGASAWVLLPAAISLALFAWLLTLHPTAAGRVYAAYGGVYVTIAIVWLWGVDGIQPHRWDLAGVVLMLAGMAVIMFAPR</sequence>
<gene>
    <name type="ordered locus">Sputw3181_1172</name>
</gene>